<dbReference type="EMBL" id="X15053">
    <property type="protein sequence ID" value="CAA33152.1"/>
    <property type="molecule type" value="mRNA"/>
</dbReference>
<dbReference type="PIR" id="S04939">
    <property type="entry name" value="S04939"/>
</dbReference>
<dbReference type="RefSeq" id="XP_001701015.1">
    <property type="nucleotide sequence ID" value="XM_001700963.2"/>
</dbReference>
<dbReference type="SMR" id="P12811"/>
<dbReference type="PaxDb" id="3055-EDP07269"/>
<dbReference type="EnsemblPlants" id="PNW80468">
    <property type="protein sequence ID" value="PNW80468"/>
    <property type="gene ID" value="CHLRE_07g318800v5"/>
</dbReference>
<dbReference type="GeneID" id="5726379"/>
<dbReference type="Gramene" id="PNW80468">
    <property type="protein sequence ID" value="PNW80468"/>
    <property type="gene ID" value="CHLRE_07g318800v5"/>
</dbReference>
<dbReference type="KEGG" id="cre:CHLRE_07g318800v5"/>
<dbReference type="eggNOG" id="KOG0710">
    <property type="taxonomic scope" value="Eukaryota"/>
</dbReference>
<dbReference type="HOGENOM" id="CLU_046737_12_0_1"/>
<dbReference type="OMA" id="YHIKERS"/>
<dbReference type="OrthoDB" id="1245404at2759"/>
<dbReference type="GO" id="GO:0009507">
    <property type="term" value="C:chloroplast"/>
    <property type="evidence" value="ECO:0007669"/>
    <property type="project" value="UniProtKB-SubCell"/>
</dbReference>
<dbReference type="CDD" id="cd06464">
    <property type="entry name" value="ACD_sHsps-like"/>
    <property type="match status" value="1"/>
</dbReference>
<dbReference type="FunFam" id="2.60.40.790:FF:000108">
    <property type="entry name" value="Heat shock protein 22A"/>
    <property type="match status" value="1"/>
</dbReference>
<dbReference type="Gene3D" id="2.60.40.790">
    <property type="match status" value="1"/>
</dbReference>
<dbReference type="InterPro" id="IPR002068">
    <property type="entry name" value="A-crystallin/Hsp20_dom"/>
</dbReference>
<dbReference type="InterPro" id="IPR008978">
    <property type="entry name" value="HSP20-like_chaperone"/>
</dbReference>
<dbReference type="InterPro" id="IPR031107">
    <property type="entry name" value="Small_HSP"/>
</dbReference>
<dbReference type="PANTHER" id="PTHR11527">
    <property type="entry name" value="HEAT-SHOCK PROTEIN 20 FAMILY MEMBER"/>
    <property type="match status" value="1"/>
</dbReference>
<dbReference type="Pfam" id="PF00011">
    <property type="entry name" value="HSP20"/>
    <property type="match status" value="1"/>
</dbReference>
<dbReference type="SUPFAM" id="SSF49764">
    <property type="entry name" value="HSP20-like chaperones"/>
    <property type="match status" value="1"/>
</dbReference>
<dbReference type="PROSITE" id="PS01031">
    <property type="entry name" value="SHSP"/>
    <property type="match status" value="1"/>
</dbReference>
<name>HS22C_CHLRE</name>
<comment type="subcellular location">
    <subcellularLocation>
        <location>Plastid</location>
        <location>Chloroplast</location>
    </subcellularLocation>
</comment>
<comment type="induction">
    <text>Regulated by light only upon heat shock.</text>
</comment>
<comment type="similarity">
    <text evidence="1">Belongs to the small heat shock protein (HSP20) family.</text>
</comment>
<protein>
    <recommendedName>
        <fullName>Heat shock 22 kDa protein, chloroplastic</fullName>
    </recommendedName>
</protein>
<accession>P12811</accession>
<keyword id="KW-0150">Chloroplast</keyword>
<keyword id="KW-0934">Plastid</keyword>
<keyword id="KW-0346">Stress response</keyword>
<organism>
    <name type="scientific">Chlamydomonas reinhardtii</name>
    <name type="common">Chlamydomonas smithii</name>
    <dbReference type="NCBI Taxonomy" id="3055"/>
    <lineage>
        <taxon>Eukaryota</taxon>
        <taxon>Viridiplantae</taxon>
        <taxon>Chlorophyta</taxon>
        <taxon>core chlorophytes</taxon>
        <taxon>Chlorophyceae</taxon>
        <taxon>CS clade</taxon>
        <taxon>Chlamydomonadales</taxon>
        <taxon>Chlamydomonadaceae</taxon>
        <taxon>Chlamydomonas</taxon>
    </lineage>
</organism>
<reference key="1">
    <citation type="journal article" date="1989" name="Eur. J. Biochem.">
        <title>The nuclear-coded chloroplast 22-kDa heat-shock protein of Chlamydomonas. Evidence for translocation into the organelle without a processing step.</title>
        <authorList>
            <person name="Grimm B."/>
            <person name="Ish-Shalom D."/>
            <person name="Even D."/>
            <person name="Glaczinski H."/>
            <person name="Ottersbach P."/>
            <person name="Kloppstech K."/>
            <person name="Ohad I."/>
        </authorList>
    </citation>
    <scope>NUCLEOTIDE SEQUENCE [MRNA]</scope>
    <source>
        <strain>Y-1</strain>
    </source>
</reference>
<feature type="chain" id="PRO_0000126002" description="Heat shock 22 kDa protein, chloroplastic">
    <location>
        <begin position="1"/>
        <end position="157"/>
    </location>
</feature>
<feature type="domain" description="sHSP" evidence="1">
    <location>
        <begin position="40"/>
        <end position="155"/>
    </location>
</feature>
<sequence length="157" mass="16704">MALSNYVFGNSAADPFFTEMDRAVNRMINNALGVAPTSAGKAGHTHAPMDIIESPTAFELHADAPGMGPDDVKVELQEGVLMVTGERKLSHTTKEAGGKVWRSERTAYSFSRAFSLPENANPDGITAAMDKGVLVVTVPKREPPAKPEPKRIAVTGA</sequence>
<proteinExistence type="evidence at transcript level"/>
<evidence type="ECO:0000255" key="1">
    <source>
        <dbReference type="PROSITE-ProRule" id="PRU00285"/>
    </source>
</evidence>